<organism>
    <name type="scientific">Pseudomonas paraeruginosa (strain DSM 24068 / PA7)</name>
    <name type="common">Pseudomonas aeruginosa (strain PA7)</name>
    <dbReference type="NCBI Taxonomy" id="381754"/>
    <lineage>
        <taxon>Bacteria</taxon>
        <taxon>Pseudomonadati</taxon>
        <taxon>Pseudomonadota</taxon>
        <taxon>Gammaproteobacteria</taxon>
        <taxon>Pseudomonadales</taxon>
        <taxon>Pseudomonadaceae</taxon>
        <taxon>Pseudomonas</taxon>
        <taxon>Pseudomonas paraeruginosa</taxon>
    </lineage>
</organism>
<sequence>MPTVFPDDSVGLVSPQTLHFNEPLELTSGKSLAEYDLVIETYGELNATQSNAVLICHALSGHHHAAGYHSAEDRKPGWWDSCIGPGKPIDTRRFFVVALNNLGGCNGSSGPASINPATGKVYGADFPMVTVEDWVHSQARLADRLGIRQWAAVVGGSLGGMQALQWTISYPERVRHCLCIASAPKLSAQNIAFNEVARQAILSDPEFLGGYFQEQGVIPKRGLKLARMVGHITYLSDDAMGAKFGRVLKTEKLNYDLHSVEFQVESYLRYQGEEFSTRFDANTYLLMTKALDYFDPAAAHGDDLVRTLEGVEADFCLMSFTTDWRFSPARSREIVDALIAAKKNVSYLEIDAPQGHDAFLMPIPRYLQAFSGYMNRISV</sequence>
<evidence type="ECO:0000255" key="1">
    <source>
        <dbReference type="HAMAP-Rule" id="MF_00296"/>
    </source>
</evidence>
<proteinExistence type="inferred from homology"/>
<gene>
    <name evidence="1" type="primary">metXS</name>
    <name type="ordered locus">PSPA7_0489</name>
</gene>
<accession>A6UYJ9</accession>
<keyword id="KW-0012">Acyltransferase</keyword>
<keyword id="KW-0028">Amino-acid biosynthesis</keyword>
<keyword id="KW-0963">Cytoplasm</keyword>
<keyword id="KW-0486">Methionine biosynthesis</keyword>
<keyword id="KW-0808">Transferase</keyword>
<feature type="chain" id="PRO_1000021893" description="Homoserine O-succinyltransferase">
    <location>
        <begin position="1"/>
        <end position="379"/>
    </location>
</feature>
<feature type="domain" description="AB hydrolase-1" evidence="1">
    <location>
        <begin position="51"/>
        <end position="360"/>
    </location>
</feature>
<feature type="active site" description="Nucleophile" evidence="1">
    <location>
        <position position="157"/>
    </location>
</feature>
<feature type="active site" evidence="1">
    <location>
        <position position="323"/>
    </location>
</feature>
<feature type="active site" evidence="1">
    <location>
        <position position="356"/>
    </location>
</feature>
<feature type="binding site" evidence="1">
    <location>
        <position position="227"/>
    </location>
    <ligand>
        <name>substrate</name>
    </ligand>
</feature>
<feature type="binding site" evidence="1">
    <location>
        <position position="357"/>
    </location>
    <ligand>
        <name>substrate</name>
    </ligand>
</feature>
<feature type="site" description="Important for acyl-CoA specificity" evidence="1">
    <location>
        <position position="325"/>
    </location>
</feature>
<reference key="1">
    <citation type="submission" date="2007-06" db="EMBL/GenBank/DDBJ databases">
        <authorList>
            <person name="Dodson R.J."/>
            <person name="Harkins D."/>
            <person name="Paulsen I.T."/>
        </authorList>
    </citation>
    <scope>NUCLEOTIDE SEQUENCE [LARGE SCALE GENOMIC DNA]</scope>
    <source>
        <strain>DSM 24068 / PA7</strain>
    </source>
</reference>
<name>METXS_PSEP7</name>
<protein>
    <recommendedName>
        <fullName evidence="1">Homoserine O-succinyltransferase</fullName>
        <shortName evidence="1">HST</shortName>
        <ecNumber evidence="1">2.3.1.46</ecNumber>
    </recommendedName>
    <alternativeName>
        <fullName evidence="1">Homoserine transsuccinylase</fullName>
        <shortName evidence="1">HTS</shortName>
    </alternativeName>
</protein>
<comment type="function">
    <text evidence="1">Transfers a succinyl group from succinyl-CoA to L-homoserine, forming succinyl-L-homoserine.</text>
</comment>
<comment type="catalytic activity">
    <reaction evidence="1">
        <text>L-homoserine + succinyl-CoA = O-succinyl-L-homoserine + CoA</text>
        <dbReference type="Rhea" id="RHEA:22008"/>
        <dbReference type="ChEBI" id="CHEBI:57287"/>
        <dbReference type="ChEBI" id="CHEBI:57292"/>
        <dbReference type="ChEBI" id="CHEBI:57476"/>
        <dbReference type="ChEBI" id="CHEBI:57661"/>
        <dbReference type="EC" id="2.3.1.46"/>
    </reaction>
</comment>
<comment type="pathway">
    <text evidence="1">Amino-acid biosynthesis; L-methionine biosynthesis via de novo pathway; O-succinyl-L-homoserine from L-homoserine: step 1/1.</text>
</comment>
<comment type="subunit">
    <text evidence="1">Homodimer.</text>
</comment>
<comment type="subcellular location">
    <subcellularLocation>
        <location evidence="1">Cytoplasm</location>
    </subcellularLocation>
</comment>
<comment type="similarity">
    <text evidence="1">Belongs to the AB hydrolase superfamily. MetX family.</text>
</comment>
<dbReference type="EC" id="2.3.1.46" evidence="1"/>
<dbReference type="EMBL" id="CP000744">
    <property type="protein sequence ID" value="ABR86723.1"/>
    <property type="molecule type" value="Genomic_DNA"/>
</dbReference>
<dbReference type="RefSeq" id="WP_003155371.1">
    <property type="nucleotide sequence ID" value="NC_009656.1"/>
</dbReference>
<dbReference type="SMR" id="A6UYJ9"/>
<dbReference type="ESTHER" id="pseae-metx">
    <property type="family name" value="Homoserine_transacetylase"/>
</dbReference>
<dbReference type="KEGG" id="pap:PSPA7_0489"/>
<dbReference type="HOGENOM" id="CLU_028760_1_2_6"/>
<dbReference type="UniPathway" id="UPA00051">
    <property type="reaction ID" value="UER00075"/>
</dbReference>
<dbReference type="Proteomes" id="UP000001582">
    <property type="component" value="Chromosome"/>
</dbReference>
<dbReference type="GO" id="GO:0005737">
    <property type="term" value="C:cytoplasm"/>
    <property type="evidence" value="ECO:0007669"/>
    <property type="project" value="UniProtKB-SubCell"/>
</dbReference>
<dbReference type="GO" id="GO:0004414">
    <property type="term" value="F:homoserine O-acetyltransferase activity"/>
    <property type="evidence" value="ECO:0007669"/>
    <property type="project" value="TreeGrafter"/>
</dbReference>
<dbReference type="GO" id="GO:0008899">
    <property type="term" value="F:homoserine O-succinyltransferase activity"/>
    <property type="evidence" value="ECO:0007669"/>
    <property type="project" value="UniProtKB-UniRule"/>
</dbReference>
<dbReference type="GO" id="GO:0009092">
    <property type="term" value="P:homoserine metabolic process"/>
    <property type="evidence" value="ECO:0007669"/>
    <property type="project" value="TreeGrafter"/>
</dbReference>
<dbReference type="GO" id="GO:0009086">
    <property type="term" value="P:methionine biosynthetic process"/>
    <property type="evidence" value="ECO:0007669"/>
    <property type="project" value="UniProtKB-UniRule"/>
</dbReference>
<dbReference type="FunFam" id="1.10.1740.110:FF:000001">
    <property type="entry name" value="Homoserine O-acetyltransferase"/>
    <property type="match status" value="1"/>
</dbReference>
<dbReference type="Gene3D" id="1.10.1740.110">
    <property type="match status" value="1"/>
</dbReference>
<dbReference type="Gene3D" id="3.40.50.1820">
    <property type="entry name" value="alpha/beta hydrolase"/>
    <property type="match status" value="1"/>
</dbReference>
<dbReference type="HAMAP" id="MF_00296">
    <property type="entry name" value="MetX_acyltransf"/>
    <property type="match status" value="1"/>
</dbReference>
<dbReference type="InterPro" id="IPR000073">
    <property type="entry name" value="AB_hydrolase_1"/>
</dbReference>
<dbReference type="InterPro" id="IPR029058">
    <property type="entry name" value="AB_hydrolase_fold"/>
</dbReference>
<dbReference type="InterPro" id="IPR008220">
    <property type="entry name" value="HAT_MetX-like"/>
</dbReference>
<dbReference type="NCBIfam" id="TIGR01392">
    <property type="entry name" value="homoserO_Ac_trn"/>
    <property type="match status" value="1"/>
</dbReference>
<dbReference type="NCBIfam" id="NF001209">
    <property type="entry name" value="PRK00175.1"/>
    <property type="match status" value="1"/>
</dbReference>
<dbReference type="PANTHER" id="PTHR32268">
    <property type="entry name" value="HOMOSERINE O-ACETYLTRANSFERASE"/>
    <property type="match status" value="1"/>
</dbReference>
<dbReference type="PANTHER" id="PTHR32268:SF11">
    <property type="entry name" value="HOMOSERINE O-ACETYLTRANSFERASE"/>
    <property type="match status" value="1"/>
</dbReference>
<dbReference type="Pfam" id="PF00561">
    <property type="entry name" value="Abhydrolase_1"/>
    <property type="match status" value="1"/>
</dbReference>
<dbReference type="PIRSF" id="PIRSF000443">
    <property type="entry name" value="Homoser_Ac_trans"/>
    <property type="match status" value="1"/>
</dbReference>
<dbReference type="SUPFAM" id="SSF53474">
    <property type="entry name" value="alpha/beta-Hydrolases"/>
    <property type="match status" value="1"/>
</dbReference>